<proteinExistence type="inferred from homology"/>
<accession>A6T7R0</accession>
<name>MSRB_KLEP7</name>
<protein>
    <recommendedName>
        <fullName evidence="2">Peptide methionine sulfoxide reductase MsrB</fullName>
        <ecNumber evidence="2">1.8.4.12</ecNumber>
    </recommendedName>
    <alternativeName>
        <fullName evidence="2">Peptide-methionine (R)-S-oxide reductase</fullName>
    </alternativeName>
</protein>
<organism>
    <name type="scientific">Klebsiella pneumoniae subsp. pneumoniae (strain ATCC 700721 / MGH 78578)</name>
    <dbReference type="NCBI Taxonomy" id="272620"/>
    <lineage>
        <taxon>Bacteria</taxon>
        <taxon>Pseudomonadati</taxon>
        <taxon>Pseudomonadota</taxon>
        <taxon>Gammaproteobacteria</taxon>
        <taxon>Enterobacterales</taxon>
        <taxon>Enterobacteriaceae</taxon>
        <taxon>Klebsiella/Raoultella group</taxon>
        <taxon>Klebsiella</taxon>
        <taxon>Klebsiella pneumoniae complex</taxon>
    </lineage>
</organism>
<keyword id="KW-0479">Metal-binding</keyword>
<keyword id="KW-0560">Oxidoreductase</keyword>
<keyword id="KW-0862">Zinc</keyword>
<comment type="catalytic activity">
    <reaction evidence="2">
        <text>L-methionyl-[protein] + [thioredoxin]-disulfide + H2O = L-methionyl-(R)-S-oxide-[protein] + [thioredoxin]-dithiol</text>
        <dbReference type="Rhea" id="RHEA:24164"/>
        <dbReference type="Rhea" id="RHEA-COMP:10698"/>
        <dbReference type="Rhea" id="RHEA-COMP:10700"/>
        <dbReference type="Rhea" id="RHEA-COMP:12313"/>
        <dbReference type="Rhea" id="RHEA-COMP:12314"/>
        <dbReference type="ChEBI" id="CHEBI:15377"/>
        <dbReference type="ChEBI" id="CHEBI:16044"/>
        <dbReference type="ChEBI" id="CHEBI:29950"/>
        <dbReference type="ChEBI" id="CHEBI:45764"/>
        <dbReference type="ChEBI" id="CHEBI:50058"/>
        <dbReference type="EC" id="1.8.4.12"/>
    </reaction>
</comment>
<comment type="cofactor">
    <cofactor evidence="2">
        <name>Zn(2+)</name>
        <dbReference type="ChEBI" id="CHEBI:29105"/>
    </cofactor>
    <text evidence="2">Binds 1 zinc ion per subunit. The zinc ion is important for the structural integrity of the protein.</text>
</comment>
<comment type="similarity">
    <text evidence="2">Belongs to the MsrB Met sulfoxide reductase family.</text>
</comment>
<evidence type="ECO:0000250" key="1"/>
<evidence type="ECO:0000255" key="2">
    <source>
        <dbReference type="HAMAP-Rule" id="MF_01400"/>
    </source>
</evidence>
<evidence type="ECO:0000255" key="3">
    <source>
        <dbReference type="PROSITE-ProRule" id="PRU01126"/>
    </source>
</evidence>
<reference key="1">
    <citation type="submission" date="2006-09" db="EMBL/GenBank/DDBJ databases">
        <authorList>
            <consortium name="The Klebsiella pneumonia Genome Sequencing Project"/>
            <person name="McClelland M."/>
            <person name="Sanderson E.K."/>
            <person name="Spieth J."/>
            <person name="Clifton W.S."/>
            <person name="Latreille P."/>
            <person name="Sabo A."/>
            <person name="Pepin K."/>
            <person name="Bhonagiri V."/>
            <person name="Porwollik S."/>
            <person name="Ali J."/>
            <person name="Wilson R.K."/>
        </authorList>
    </citation>
    <scope>NUCLEOTIDE SEQUENCE [LARGE SCALE GENOMIC DNA]</scope>
    <source>
        <strain>ATCC 700721 / MGH 78578</strain>
    </source>
</reference>
<feature type="initiator methionine" description="Removed" evidence="1">
    <location>
        <position position="1"/>
    </location>
</feature>
<feature type="chain" id="PRO_1000068273" description="Peptide methionine sulfoxide reductase MsrB">
    <location>
        <begin position="2"/>
        <end position="137"/>
    </location>
</feature>
<feature type="domain" description="MsrB" evidence="3">
    <location>
        <begin position="7"/>
        <end position="129"/>
    </location>
</feature>
<feature type="active site" description="Nucleophile" evidence="3">
    <location>
        <position position="118"/>
    </location>
</feature>
<feature type="binding site" evidence="3">
    <location>
        <position position="46"/>
    </location>
    <ligand>
        <name>Zn(2+)</name>
        <dbReference type="ChEBI" id="CHEBI:29105"/>
    </ligand>
</feature>
<feature type="binding site" evidence="3">
    <location>
        <position position="49"/>
    </location>
    <ligand>
        <name>Zn(2+)</name>
        <dbReference type="ChEBI" id="CHEBI:29105"/>
    </ligand>
</feature>
<feature type="binding site" evidence="3">
    <location>
        <position position="95"/>
    </location>
    <ligand>
        <name>Zn(2+)</name>
        <dbReference type="ChEBI" id="CHEBI:29105"/>
    </ligand>
</feature>
<feature type="binding site" evidence="3">
    <location>
        <position position="98"/>
    </location>
    <ligand>
        <name>Zn(2+)</name>
        <dbReference type="ChEBI" id="CHEBI:29105"/>
    </ligand>
</feature>
<gene>
    <name evidence="2" type="primary">msrB</name>
    <name type="ordered locus">KPN78578_11700</name>
    <name type="ORF">KPN_01198</name>
</gene>
<sequence length="137" mass="15292">MANKPTPEELKNGLSEMQFYVTQHHGTEPPFTGRLLHNKKNGVYHCLVCDAPLFNSQTKYDSGCGWPSFYEPVSAEAIRYLTDNSHGMQRIEIRCGNCDAHLGHVFPDGPQPTGERYCVNSASLSFTDEQNGEQIKG</sequence>
<dbReference type="EC" id="1.8.4.12" evidence="2"/>
<dbReference type="EMBL" id="CP000647">
    <property type="protein sequence ID" value="ABR76631.1"/>
    <property type="molecule type" value="Genomic_DNA"/>
</dbReference>
<dbReference type="RefSeq" id="WP_002901246.1">
    <property type="nucleotide sequence ID" value="NC_009648.1"/>
</dbReference>
<dbReference type="SMR" id="A6T7R0"/>
<dbReference type="STRING" id="272620.KPN_01198"/>
<dbReference type="PaxDb" id="272620-KPN_01198"/>
<dbReference type="EnsemblBacteria" id="ABR76631">
    <property type="protein sequence ID" value="ABR76631"/>
    <property type="gene ID" value="KPN_01198"/>
</dbReference>
<dbReference type="KEGG" id="kpn:KPN_01198"/>
<dbReference type="HOGENOM" id="CLU_031040_8_5_6"/>
<dbReference type="Proteomes" id="UP000000265">
    <property type="component" value="Chromosome"/>
</dbReference>
<dbReference type="GO" id="GO:0005737">
    <property type="term" value="C:cytoplasm"/>
    <property type="evidence" value="ECO:0007669"/>
    <property type="project" value="TreeGrafter"/>
</dbReference>
<dbReference type="GO" id="GO:0033743">
    <property type="term" value="F:peptide-methionine (R)-S-oxide reductase activity"/>
    <property type="evidence" value="ECO:0007669"/>
    <property type="project" value="UniProtKB-UniRule"/>
</dbReference>
<dbReference type="GO" id="GO:0008270">
    <property type="term" value="F:zinc ion binding"/>
    <property type="evidence" value="ECO:0007669"/>
    <property type="project" value="UniProtKB-UniRule"/>
</dbReference>
<dbReference type="GO" id="GO:0030091">
    <property type="term" value="P:protein repair"/>
    <property type="evidence" value="ECO:0007669"/>
    <property type="project" value="InterPro"/>
</dbReference>
<dbReference type="GO" id="GO:0006979">
    <property type="term" value="P:response to oxidative stress"/>
    <property type="evidence" value="ECO:0007669"/>
    <property type="project" value="InterPro"/>
</dbReference>
<dbReference type="FunFam" id="2.170.150.20:FF:000001">
    <property type="entry name" value="Peptide methionine sulfoxide reductase MsrB"/>
    <property type="match status" value="1"/>
</dbReference>
<dbReference type="Gene3D" id="2.170.150.20">
    <property type="entry name" value="Peptide methionine sulfoxide reductase"/>
    <property type="match status" value="1"/>
</dbReference>
<dbReference type="HAMAP" id="MF_01400">
    <property type="entry name" value="MsrB"/>
    <property type="match status" value="1"/>
</dbReference>
<dbReference type="InterPro" id="IPR028427">
    <property type="entry name" value="Met_Sox_Rdtase_MsrB"/>
</dbReference>
<dbReference type="InterPro" id="IPR002579">
    <property type="entry name" value="Met_Sox_Rdtase_MsrB_dom"/>
</dbReference>
<dbReference type="InterPro" id="IPR011057">
    <property type="entry name" value="Mss4-like_sf"/>
</dbReference>
<dbReference type="NCBIfam" id="TIGR00357">
    <property type="entry name" value="peptide-methionine (R)-S-oxide reductase MsrB"/>
    <property type="match status" value="1"/>
</dbReference>
<dbReference type="PANTHER" id="PTHR10173">
    <property type="entry name" value="METHIONINE SULFOXIDE REDUCTASE"/>
    <property type="match status" value="1"/>
</dbReference>
<dbReference type="PANTHER" id="PTHR10173:SF52">
    <property type="entry name" value="METHIONINE-R-SULFOXIDE REDUCTASE B1"/>
    <property type="match status" value="1"/>
</dbReference>
<dbReference type="Pfam" id="PF01641">
    <property type="entry name" value="SelR"/>
    <property type="match status" value="1"/>
</dbReference>
<dbReference type="SUPFAM" id="SSF51316">
    <property type="entry name" value="Mss4-like"/>
    <property type="match status" value="1"/>
</dbReference>
<dbReference type="PROSITE" id="PS51790">
    <property type="entry name" value="MSRB"/>
    <property type="match status" value="1"/>
</dbReference>